<comment type="function">
    <text evidence="1">Catalyzes the interconversion of 2-phosphoglycerate and 3-phosphoglycerate.</text>
</comment>
<comment type="catalytic activity">
    <reaction evidence="1">
        <text>(2R)-2-phosphoglycerate = (2R)-3-phosphoglycerate</text>
        <dbReference type="Rhea" id="RHEA:15901"/>
        <dbReference type="ChEBI" id="CHEBI:58272"/>
        <dbReference type="ChEBI" id="CHEBI:58289"/>
        <dbReference type="EC" id="5.4.2.11"/>
    </reaction>
</comment>
<comment type="pathway">
    <text evidence="1">Carbohydrate degradation; glycolysis; pyruvate from D-glyceraldehyde 3-phosphate: step 3/5.</text>
</comment>
<comment type="subunit">
    <text evidence="1">Homodimer.</text>
</comment>
<comment type="similarity">
    <text evidence="1">Belongs to the phosphoglycerate mutase family. BPG-dependent PGAM subfamily.</text>
</comment>
<sequence length="234" mass="27104">MHQLVLLRHGESVWNKENLFTGWTDVELSPSGEEESRKAGLLLKEHGFVFDMAFTSLLKRAIKTLWIVLEQMDLMWIPERKEWRLNERHYGALQGLNKAQTAEQYGDEQVKLWRRSYKVRPPALAEGDRRHPSFDPRYHSLQGELLPSTECLQDTVERVLPFWRQQAVPALRQGKRILIAAHGNSLRGLIKYLDQVSDEDIVGLEIPTGSPLVYELDSDLKPMRHYYLETGKTG</sequence>
<dbReference type="EC" id="5.4.2.11" evidence="1"/>
<dbReference type="EMBL" id="CP001661">
    <property type="protein sequence ID" value="ACT19591.1"/>
    <property type="molecule type" value="Genomic_DNA"/>
</dbReference>
<dbReference type="SMR" id="C6E639"/>
<dbReference type="STRING" id="443144.GM21_3570"/>
<dbReference type="KEGG" id="gem:GM21_3570"/>
<dbReference type="eggNOG" id="COG0588">
    <property type="taxonomic scope" value="Bacteria"/>
</dbReference>
<dbReference type="HOGENOM" id="CLU_033323_1_1_7"/>
<dbReference type="OrthoDB" id="9781415at2"/>
<dbReference type="UniPathway" id="UPA00109">
    <property type="reaction ID" value="UER00186"/>
</dbReference>
<dbReference type="GO" id="GO:0004619">
    <property type="term" value="F:phosphoglycerate mutase activity"/>
    <property type="evidence" value="ECO:0007669"/>
    <property type="project" value="UniProtKB-EC"/>
</dbReference>
<dbReference type="GO" id="GO:0006094">
    <property type="term" value="P:gluconeogenesis"/>
    <property type="evidence" value="ECO:0007669"/>
    <property type="project" value="UniProtKB-UniRule"/>
</dbReference>
<dbReference type="GO" id="GO:0006096">
    <property type="term" value="P:glycolytic process"/>
    <property type="evidence" value="ECO:0007669"/>
    <property type="project" value="UniProtKB-UniRule"/>
</dbReference>
<dbReference type="CDD" id="cd07067">
    <property type="entry name" value="HP_PGM_like"/>
    <property type="match status" value="1"/>
</dbReference>
<dbReference type="FunFam" id="3.40.50.1240:FF:000003">
    <property type="entry name" value="2,3-bisphosphoglycerate-dependent phosphoglycerate mutase"/>
    <property type="match status" value="1"/>
</dbReference>
<dbReference type="Gene3D" id="3.40.50.1240">
    <property type="entry name" value="Phosphoglycerate mutase-like"/>
    <property type="match status" value="1"/>
</dbReference>
<dbReference type="HAMAP" id="MF_01039">
    <property type="entry name" value="PGAM_GpmA"/>
    <property type="match status" value="1"/>
</dbReference>
<dbReference type="InterPro" id="IPR013078">
    <property type="entry name" value="His_Pase_superF_clade-1"/>
</dbReference>
<dbReference type="InterPro" id="IPR029033">
    <property type="entry name" value="His_PPase_superfam"/>
</dbReference>
<dbReference type="InterPro" id="IPR001345">
    <property type="entry name" value="PG/BPGM_mutase_AS"/>
</dbReference>
<dbReference type="InterPro" id="IPR005952">
    <property type="entry name" value="Phosphogly_mut1"/>
</dbReference>
<dbReference type="NCBIfam" id="TIGR01258">
    <property type="entry name" value="pgm_1"/>
    <property type="match status" value="1"/>
</dbReference>
<dbReference type="NCBIfam" id="NF010713">
    <property type="entry name" value="PRK14115.1"/>
    <property type="match status" value="1"/>
</dbReference>
<dbReference type="PANTHER" id="PTHR11931">
    <property type="entry name" value="PHOSPHOGLYCERATE MUTASE"/>
    <property type="match status" value="1"/>
</dbReference>
<dbReference type="Pfam" id="PF00300">
    <property type="entry name" value="His_Phos_1"/>
    <property type="match status" value="2"/>
</dbReference>
<dbReference type="PIRSF" id="PIRSF000709">
    <property type="entry name" value="6PFK_2-Ptase"/>
    <property type="match status" value="1"/>
</dbReference>
<dbReference type="SMART" id="SM00855">
    <property type="entry name" value="PGAM"/>
    <property type="match status" value="1"/>
</dbReference>
<dbReference type="SUPFAM" id="SSF53254">
    <property type="entry name" value="Phosphoglycerate mutase-like"/>
    <property type="match status" value="1"/>
</dbReference>
<dbReference type="PROSITE" id="PS00175">
    <property type="entry name" value="PG_MUTASE"/>
    <property type="match status" value="1"/>
</dbReference>
<organism>
    <name type="scientific">Geobacter sp. (strain M21)</name>
    <dbReference type="NCBI Taxonomy" id="443144"/>
    <lineage>
        <taxon>Bacteria</taxon>
        <taxon>Pseudomonadati</taxon>
        <taxon>Thermodesulfobacteriota</taxon>
        <taxon>Desulfuromonadia</taxon>
        <taxon>Geobacterales</taxon>
        <taxon>Geobacteraceae</taxon>
        <taxon>Geobacter</taxon>
    </lineage>
</organism>
<keyword id="KW-0312">Gluconeogenesis</keyword>
<keyword id="KW-0324">Glycolysis</keyword>
<keyword id="KW-0413">Isomerase</keyword>
<reference key="1">
    <citation type="submission" date="2009-07" db="EMBL/GenBank/DDBJ databases">
        <title>Complete sequence of Geobacter sp. M21.</title>
        <authorList>
            <consortium name="US DOE Joint Genome Institute"/>
            <person name="Lucas S."/>
            <person name="Copeland A."/>
            <person name="Lapidus A."/>
            <person name="Glavina del Rio T."/>
            <person name="Dalin E."/>
            <person name="Tice H."/>
            <person name="Bruce D."/>
            <person name="Goodwin L."/>
            <person name="Pitluck S."/>
            <person name="Saunders E."/>
            <person name="Brettin T."/>
            <person name="Detter J.C."/>
            <person name="Han C."/>
            <person name="Larimer F."/>
            <person name="Land M."/>
            <person name="Hauser L."/>
            <person name="Kyrpides N."/>
            <person name="Ovchinnikova G."/>
            <person name="Lovley D."/>
        </authorList>
    </citation>
    <scope>NUCLEOTIDE SEQUENCE [LARGE SCALE GENOMIC DNA]</scope>
    <source>
        <strain>M21</strain>
    </source>
</reference>
<feature type="chain" id="PRO_1000213390" description="2,3-bisphosphoglycerate-dependent phosphoglycerate mutase">
    <location>
        <begin position="1"/>
        <end position="234"/>
    </location>
</feature>
<feature type="active site" description="Tele-phosphohistidine intermediate" evidence="1">
    <location>
        <position position="9"/>
    </location>
</feature>
<feature type="active site" description="Proton donor/acceptor" evidence="1">
    <location>
        <position position="87"/>
    </location>
</feature>
<feature type="binding site" evidence="1">
    <location>
        <begin position="8"/>
        <end position="15"/>
    </location>
    <ligand>
        <name>substrate</name>
    </ligand>
</feature>
<feature type="binding site" evidence="1">
    <location>
        <begin position="21"/>
        <end position="22"/>
    </location>
    <ligand>
        <name>substrate</name>
    </ligand>
</feature>
<feature type="binding site" evidence="1">
    <location>
        <position position="60"/>
    </location>
    <ligand>
        <name>substrate</name>
    </ligand>
</feature>
<feature type="binding site" evidence="1">
    <location>
        <begin position="87"/>
        <end position="90"/>
    </location>
    <ligand>
        <name>substrate</name>
    </ligand>
</feature>
<feature type="binding site" evidence="1">
    <location>
        <position position="98"/>
    </location>
    <ligand>
        <name>substrate</name>
    </ligand>
</feature>
<feature type="binding site" evidence="1">
    <location>
        <begin position="114"/>
        <end position="115"/>
    </location>
    <ligand>
        <name>substrate</name>
    </ligand>
</feature>
<feature type="binding site" evidence="1">
    <location>
        <begin position="183"/>
        <end position="184"/>
    </location>
    <ligand>
        <name>substrate</name>
    </ligand>
</feature>
<feature type="site" description="Transition state stabilizer" evidence="1">
    <location>
        <position position="182"/>
    </location>
</feature>
<evidence type="ECO:0000255" key="1">
    <source>
        <dbReference type="HAMAP-Rule" id="MF_01039"/>
    </source>
</evidence>
<protein>
    <recommendedName>
        <fullName evidence="1">2,3-bisphosphoglycerate-dependent phosphoglycerate mutase</fullName>
        <shortName evidence="1">BPG-dependent PGAM</shortName>
        <shortName evidence="1">PGAM</shortName>
        <shortName evidence="1">Phosphoglyceromutase</shortName>
        <shortName evidence="1">dPGM</shortName>
        <ecNumber evidence="1">5.4.2.11</ecNumber>
    </recommendedName>
</protein>
<gene>
    <name evidence="1" type="primary">gpmA</name>
    <name type="ordered locus">GM21_3570</name>
</gene>
<proteinExistence type="inferred from homology"/>
<accession>C6E639</accession>
<name>GPMA_GEOSM</name>